<comment type="function">
    <text evidence="1">Catalyzes the conversion of dethiobiotin (DTB) to biotin by the insertion of a sulfur atom into dethiobiotin via a radical-based mechanism.</text>
</comment>
<comment type="catalytic activity">
    <reaction evidence="1">
        <text>(4R,5S)-dethiobiotin + (sulfur carrier)-SH + 2 reduced [2Fe-2S]-[ferredoxin] + 2 S-adenosyl-L-methionine = (sulfur carrier)-H + biotin + 2 5'-deoxyadenosine + 2 L-methionine + 2 oxidized [2Fe-2S]-[ferredoxin]</text>
        <dbReference type="Rhea" id="RHEA:22060"/>
        <dbReference type="Rhea" id="RHEA-COMP:10000"/>
        <dbReference type="Rhea" id="RHEA-COMP:10001"/>
        <dbReference type="Rhea" id="RHEA-COMP:14737"/>
        <dbReference type="Rhea" id="RHEA-COMP:14739"/>
        <dbReference type="ChEBI" id="CHEBI:17319"/>
        <dbReference type="ChEBI" id="CHEBI:29917"/>
        <dbReference type="ChEBI" id="CHEBI:33737"/>
        <dbReference type="ChEBI" id="CHEBI:33738"/>
        <dbReference type="ChEBI" id="CHEBI:57586"/>
        <dbReference type="ChEBI" id="CHEBI:57844"/>
        <dbReference type="ChEBI" id="CHEBI:59789"/>
        <dbReference type="ChEBI" id="CHEBI:64428"/>
        <dbReference type="ChEBI" id="CHEBI:149473"/>
        <dbReference type="EC" id="2.8.1.6"/>
    </reaction>
</comment>
<comment type="cofactor">
    <cofactor evidence="1">
        <name>[4Fe-4S] cluster</name>
        <dbReference type="ChEBI" id="CHEBI:49883"/>
    </cofactor>
    <text evidence="1">Binds 1 [4Fe-4S] cluster. The cluster is coordinated with 3 cysteines and an exchangeable S-adenosyl-L-methionine.</text>
</comment>
<comment type="cofactor">
    <cofactor evidence="1">
        <name>[2Fe-2S] cluster</name>
        <dbReference type="ChEBI" id="CHEBI:190135"/>
    </cofactor>
    <text evidence="1">Binds 1 [2Fe-2S] cluster. The cluster is coordinated with 3 cysteines and 1 arginine.</text>
</comment>
<comment type="pathway">
    <text evidence="1">Cofactor biosynthesis; biotin biosynthesis; biotin from 7,8-diaminononanoate: step 2/2.</text>
</comment>
<comment type="subunit">
    <text evidence="1">Homodimer.</text>
</comment>
<comment type="similarity">
    <text evidence="1">Belongs to the radical SAM superfamily. Biotin synthase family.</text>
</comment>
<comment type="sequence caution" evidence="3">
    <conflict type="erroneous initiation">
        <sequence resource="EMBL-CDS" id="ABI46705"/>
    </conflict>
</comment>
<organism>
    <name type="scientific">Synechococcus sp. (strain CC9311)</name>
    <dbReference type="NCBI Taxonomy" id="64471"/>
    <lineage>
        <taxon>Bacteria</taxon>
        <taxon>Bacillati</taxon>
        <taxon>Cyanobacteriota</taxon>
        <taxon>Cyanophyceae</taxon>
        <taxon>Synechococcales</taxon>
        <taxon>Synechococcaceae</taxon>
        <taxon>Synechococcus</taxon>
    </lineage>
</organism>
<sequence length="328" mass="35594">MTEAVEVRHDWTRSEIEALLDLPLMDLLWRAQGVHRASNPGYHVQLASLLSVKTGGCEEDCAYCPQSMHHSSDVTGQPELQVAPVLERAKAAKQAGADRFCMGWAWREIRDGAPFEAMLQMVSGVRALGMEACVTAGMLTDGQAQRLAKAGLTAYNHNLDTSPEHYDKIITTRTFQERLETLERVRQAGVTLCCGGIIGMGETIGDRASMLQVLASINPHPESVPINALVAVEGTPLEELPPIDPIELVRMIAVTRILMPGSRVRLSAGREQLSKEAQILCLQAGADSIFYGETLLTTGNPAVEADRELLRTAGVQANWLSASEKLAA</sequence>
<dbReference type="EC" id="2.8.1.6" evidence="1"/>
<dbReference type="EMBL" id="CP000435">
    <property type="protein sequence ID" value="ABI46705.1"/>
    <property type="status" value="ALT_INIT"/>
    <property type="molecule type" value="Genomic_DNA"/>
</dbReference>
<dbReference type="RefSeq" id="WP_041426446.1">
    <property type="nucleotide sequence ID" value="NC_008319.1"/>
</dbReference>
<dbReference type="SMR" id="Q0IBC8"/>
<dbReference type="STRING" id="64471.sync_1032"/>
<dbReference type="KEGG" id="syg:sync_1032"/>
<dbReference type="eggNOG" id="COG0502">
    <property type="taxonomic scope" value="Bacteria"/>
</dbReference>
<dbReference type="HOGENOM" id="CLU_033172_1_2_3"/>
<dbReference type="OrthoDB" id="9786826at2"/>
<dbReference type="UniPathway" id="UPA00078">
    <property type="reaction ID" value="UER00162"/>
</dbReference>
<dbReference type="Proteomes" id="UP000001961">
    <property type="component" value="Chromosome"/>
</dbReference>
<dbReference type="GO" id="GO:0051537">
    <property type="term" value="F:2 iron, 2 sulfur cluster binding"/>
    <property type="evidence" value="ECO:0007669"/>
    <property type="project" value="UniProtKB-KW"/>
</dbReference>
<dbReference type="GO" id="GO:0051539">
    <property type="term" value="F:4 iron, 4 sulfur cluster binding"/>
    <property type="evidence" value="ECO:0007669"/>
    <property type="project" value="UniProtKB-KW"/>
</dbReference>
<dbReference type="GO" id="GO:0004076">
    <property type="term" value="F:biotin synthase activity"/>
    <property type="evidence" value="ECO:0007669"/>
    <property type="project" value="UniProtKB-UniRule"/>
</dbReference>
<dbReference type="GO" id="GO:0005506">
    <property type="term" value="F:iron ion binding"/>
    <property type="evidence" value="ECO:0007669"/>
    <property type="project" value="UniProtKB-UniRule"/>
</dbReference>
<dbReference type="GO" id="GO:0009102">
    <property type="term" value="P:biotin biosynthetic process"/>
    <property type="evidence" value="ECO:0007669"/>
    <property type="project" value="UniProtKB-UniRule"/>
</dbReference>
<dbReference type="CDD" id="cd01335">
    <property type="entry name" value="Radical_SAM"/>
    <property type="match status" value="1"/>
</dbReference>
<dbReference type="Gene3D" id="3.20.20.70">
    <property type="entry name" value="Aldolase class I"/>
    <property type="match status" value="1"/>
</dbReference>
<dbReference type="HAMAP" id="MF_01694">
    <property type="entry name" value="BioB"/>
    <property type="match status" value="1"/>
</dbReference>
<dbReference type="InterPro" id="IPR013785">
    <property type="entry name" value="Aldolase_TIM"/>
</dbReference>
<dbReference type="InterPro" id="IPR010722">
    <property type="entry name" value="BATS_dom"/>
</dbReference>
<dbReference type="InterPro" id="IPR002684">
    <property type="entry name" value="Biotin_synth/BioAB"/>
</dbReference>
<dbReference type="InterPro" id="IPR024177">
    <property type="entry name" value="Biotin_synthase"/>
</dbReference>
<dbReference type="InterPro" id="IPR006638">
    <property type="entry name" value="Elp3/MiaA/NifB-like_rSAM"/>
</dbReference>
<dbReference type="InterPro" id="IPR007197">
    <property type="entry name" value="rSAM"/>
</dbReference>
<dbReference type="NCBIfam" id="TIGR00433">
    <property type="entry name" value="bioB"/>
    <property type="match status" value="1"/>
</dbReference>
<dbReference type="PANTHER" id="PTHR22976">
    <property type="entry name" value="BIOTIN SYNTHASE"/>
    <property type="match status" value="1"/>
</dbReference>
<dbReference type="PANTHER" id="PTHR22976:SF2">
    <property type="entry name" value="BIOTIN SYNTHASE, MITOCHONDRIAL"/>
    <property type="match status" value="1"/>
</dbReference>
<dbReference type="Pfam" id="PF06968">
    <property type="entry name" value="BATS"/>
    <property type="match status" value="1"/>
</dbReference>
<dbReference type="Pfam" id="PF04055">
    <property type="entry name" value="Radical_SAM"/>
    <property type="match status" value="1"/>
</dbReference>
<dbReference type="PIRSF" id="PIRSF001619">
    <property type="entry name" value="Biotin_synth"/>
    <property type="match status" value="1"/>
</dbReference>
<dbReference type="SFLD" id="SFLDF00272">
    <property type="entry name" value="biotin_synthase"/>
    <property type="match status" value="1"/>
</dbReference>
<dbReference type="SFLD" id="SFLDG01278">
    <property type="entry name" value="biotin_synthase_like"/>
    <property type="match status" value="1"/>
</dbReference>
<dbReference type="SMART" id="SM00876">
    <property type="entry name" value="BATS"/>
    <property type="match status" value="1"/>
</dbReference>
<dbReference type="SMART" id="SM00729">
    <property type="entry name" value="Elp3"/>
    <property type="match status" value="1"/>
</dbReference>
<dbReference type="SUPFAM" id="SSF102114">
    <property type="entry name" value="Radical SAM enzymes"/>
    <property type="match status" value="1"/>
</dbReference>
<dbReference type="PROSITE" id="PS51918">
    <property type="entry name" value="RADICAL_SAM"/>
    <property type="match status" value="1"/>
</dbReference>
<name>BIOB_SYNS3</name>
<proteinExistence type="inferred from homology"/>
<evidence type="ECO:0000255" key="1">
    <source>
        <dbReference type="HAMAP-Rule" id="MF_01694"/>
    </source>
</evidence>
<evidence type="ECO:0000255" key="2">
    <source>
        <dbReference type="PROSITE-ProRule" id="PRU01266"/>
    </source>
</evidence>
<evidence type="ECO:0000305" key="3"/>
<protein>
    <recommendedName>
        <fullName evidence="1">Biotin synthase</fullName>
        <ecNumber evidence="1">2.8.1.6</ecNumber>
    </recommendedName>
</protein>
<accession>Q0IBC8</accession>
<reference key="1">
    <citation type="journal article" date="2006" name="Proc. Natl. Acad. Sci. U.S.A.">
        <title>Genome sequence of Synechococcus CC9311: insights into adaptation to a coastal environment.</title>
        <authorList>
            <person name="Palenik B."/>
            <person name="Ren Q."/>
            <person name="Dupont C.L."/>
            <person name="Myers G.S."/>
            <person name="Heidelberg J.F."/>
            <person name="Badger J.H."/>
            <person name="Madupu R."/>
            <person name="Nelson W.C."/>
            <person name="Brinkac L.M."/>
            <person name="Dodson R.J."/>
            <person name="Durkin A.S."/>
            <person name="Daugherty S.C."/>
            <person name="Sullivan S.A."/>
            <person name="Khouri H."/>
            <person name="Mohamoud Y."/>
            <person name="Halpin R."/>
            <person name="Paulsen I.T."/>
        </authorList>
    </citation>
    <scope>NUCLEOTIDE SEQUENCE [LARGE SCALE GENOMIC DNA]</scope>
    <source>
        <strain>CC9311</strain>
    </source>
</reference>
<gene>
    <name evidence="1" type="primary">bioB</name>
    <name type="ordered locus">sync_1032</name>
</gene>
<feature type="chain" id="PRO_0000381680" description="Biotin synthase">
    <location>
        <begin position="1"/>
        <end position="328"/>
    </location>
</feature>
<feature type="domain" description="Radical SAM core" evidence="2">
    <location>
        <begin position="42"/>
        <end position="267"/>
    </location>
</feature>
<feature type="binding site" evidence="1">
    <location>
        <position position="57"/>
    </location>
    <ligand>
        <name>[4Fe-4S] cluster</name>
        <dbReference type="ChEBI" id="CHEBI:49883"/>
        <note>4Fe-4S-S-AdoMet</note>
    </ligand>
</feature>
<feature type="binding site" evidence="1">
    <location>
        <position position="61"/>
    </location>
    <ligand>
        <name>[4Fe-4S] cluster</name>
        <dbReference type="ChEBI" id="CHEBI:49883"/>
        <note>4Fe-4S-S-AdoMet</note>
    </ligand>
</feature>
<feature type="binding site" evidence="1">
    <location>
        <position position="64"/>
    </location>
    <ligand>
        <name>[4Fe-4S] cluster</name>
        <dbReference type="ChEBI" id="CHEBI:49883"/>
        <note>4Fe-4S-S-AdoMet</note>
    </ligand>
</feature>
<feature type="binding site" evidence="1">
    <location>
        <position position="101"/>
    </location>
    <ligand>
        <name>[2Fe-2S] cluster</name>
        <dbReference type="ChEBI" id="CHEBI:190135"/>
    </ligand>
</feature>
<feature type="binding site" evidence="1">
    <location>
        <position position="133"/>
    </location>
    <ligand>
        <name>[2Fe-2S] cluster</name>
        <dbReference type="ChEBI" id="CHEBI:190135"/>
    </ligand>
</feature>
<feature type="binding site" evidence="1">
    <location>
        <position position="193"/>
    </location>
    <ligand>
        <name>[2Fe-2S] cluster</name>
        <dbReference type="ChEBI" id="CHEBI:190135"/>
    </ligand>
</feature>
<feature type="binding site" evidence="1">
    <location>
        <position position="265"/>
    </location>
    <ligand>
        <name>[2Fe-2S] cluster</name>
        <dbReference type="ChEBI" id="CHEBI:190135"/>
    </ligand>
</feature>
<keyword id="KW-0001">2Fe-2S</keyword>
<keyword id="KW-0004">4Fe-4S</keyword>
<keyword id="KW-0093">Biotin biosynthesis</keyword>
<keyword id="KW-0408">Iron</keyword>
<keyword id="KW-0411">Iron-sulfur</keyword>
<keyword id="KW-0479">Metal-binding</keyword>
<keyword id="KW-1185">Reference proteome</keyword>
<keyword id="KW-0949">S-adenosyl-L-methionine</keyword>
<keyword id="KW-0808">Transferase</keyword>